<proteinExistence type="inferred from homology"/>
<keyword id="KW-0472">Membrane</keyword>
<keyword id="KW-0520">NAD</keyword>
<keyword id="KW-0521">NADP</keyword>
<keyword id="KW-0618">Plastoquinone</keyword>
<keyword id="KW-0874">Quinone</keyword>
<keyword id="KW-0793">Thylakoid</keyword>
<keyword id="KW-1278">Translocase</keyword>
<keyword id="KW-0812">Transmembrane</keyword>
<keyword id="KW-1133">Transmembrane helix</keyword>
<keyword id="KW-0813">Transport</keyword>
<evidence type="ECO:0000255" key="1">
    <source>
        <dbReference type="HAMAP-Rule" id="MF_01355"/>
    </source>
</evidence>
<protein>
    <recommendedName>
        <fullName evidence="1">NAD(P)H-quinone oxidoreductase subunit L</fullName>
        <ecNumber evidence="1">7.1.1.-</ecNumber>
    </recommendedName>
    <alternativeName>
        <fullName evidence="1">NAD(P)H dehydrogenase I subunit L</fullName>
    </alternativeName>
    <alternativeName>
        <fullName>NDH-1 subunit L</fullName>
    </alternativeName>
    <alternativeName>
        <fullName>NDH-L</fullName>
    </alternativeName>
</protein>
<feature type="chain" id="PRO_0000353680" description="NAD(P)H-quinone oxidoreductase subunit L">
    <location>
        <begin position="1"/>
        <end position="89"/>
    </location>
</feature>
<feature type="transmembrane region" description="Helical" evidence="1">
    <location>
        <begin position="29"/>
        <end position="46"/>
    </location>
</feature>
<feature type="transmembrane region" description="Helical" evidence="1">
    <location>
        <begin position="59"/>
        <end position="79"/>
    </location>
</feature>
<reference key="1">
    <citation type="journal article" date="2007" name="PLoS Genet.">
        <title>Patterns and implications of gene gain and loss in the evolution of Prochlorococcus.</title>
        <authorList>
            <person name="Kettler G.C."/>
            <person name="Martiny A.C."/>
            <person name="Huang K."/>
            <person name="Zucker J."/>
            <person name="Coleman M.L."/>
            <person name="Rodrigue S."/>
            <person name="Chen F."/>
            <person name="Lapidus A."/>
            <person name="Ferriera S."/>
            <person name="Johnson J."/>
            <person name="Steglich C."/>
            <person name="Church G.M."/>
            <person name="Richardson P."/>
            <person name="Chisholm S.W."/>
        </authorList>
    </citation>
    <scope>NUCLEOTIDE SEQUENCE [LARGE SCALE GENOMIC DNA]</scope>
    <source>
        <strain>NATL1A</strain>
    </source>
</reference>
<name>NDHL_PROM1</name>
<accession>A2C127</accession>
<sequence>MSLISIVCLIPFGLIGAVNPIITLSAYAVLGGMYLFVVPLFLFYWMNNRWNVMGKFERLFIYGLVFLFFPGMVLFAPFLNLRMNGKEES</sequence>
<dbReference type="EC" id="7.1.1.-" evidence="1"/>
<dbReference type="EMBL" id="CP000553">
    <property type="protein sequence ID" value="ABM75187.1"/>
    <property type="molecule type" value="Genomic_DNA"/>
</dbReference>
<dbReference type="RefSeq" id="WP_011823352.1">
    <property type="nucleotide sequence ID" value="NC_008819.1"/>
</dbReference>
<dbReference type="SMR" id="A2C127"/>
<dbReference type="KEGG" id="pme:NATL1_06251"/>
<dbReference type="HOGENOM" id="CLU_171077_1_0_3"/>
<dbReference type="Proteomes" id="UP000002592">
    <property type="component" value="Chromosome"/>
</dbReference>
<dbReference type="GO" id="GO:0031676">
    <property type="term" value="C:plasma membrane-derived thylakoid membrane"/>
    <property type="evidence" value="ECO:0007669"/>
    <property type="project" value="UniProtKB-SubCell"/>
</dbReference>
<dbReference type="GO" id="GO:0016655">
    <property type="term" value="F:oxidoreductase activity, acting on NAD(P)H, quinone or similar compound as acceptor"/>
    <property type="evidence" value="ECO:0007669"/>
    <property type="project" value="UniProtKB-UniRule"/>
</dbReference>
<dbReference type="GO" id="GO:0048038">
    <property type="term" value="F:quinone binding"/>
    <property type="evidence" value="ECO:0007669"/>
    <property type="project" value="UniProtKB-KW"/>
</dbReference>
<dbReference type="HAMAP" id="MF_01355">
    <property type="entry name" value="NDH1_NDH1L"/>
    <property type="match status" value="1"/>
</dbReference>
<dbReference type="InterPro" id="IPR019654">
    <property type="entry name" value="NADH-quinone_OxRdatse_su_L"/>
</dbReference>
<dbReference type="PANTHER" id="PTHR36727">
    <property type="entry name" value="NAD(P)H-QUINONE OXIDOREDUCTASE SUBUNIT L, CHLOROPLASTIC"/>
    <property type="match status" value="1"/>
</dbReference>
<dbReference type="PANTHER" id="PTHR36727:SF2">
    <property type="entry name" value="NAD(P)H-QUINONE OXIDOREDUCTASE SUBUNIT L, CHLOROPLASTIC"/>
    <property type="match status" value="1"/>
</dbReference>
<dbReference type="Pfam" id="PF10716">
    <property type="entry name" value="NdhL"/>
    <property type="match status" value="1"/>
</dbReference>
<gene>
    <name evidence="1" type="primary">ndhL</name>
    <name type="ordered locus">NATL1_06251</name>
</gene>
<comment type="function">
    <text evidence="1">NDH-1 shuttles electrons from an unknown electron donor, via FMN and iron-sulfur (Fe-S) centers, to quinones in the respiratory and/or the photosynthetic chain. The immediate electron acceptor for the enzyme in this species is believed to be plastoquinone. Couples the redox reaction to proton translocation, and thus conserves the redox energy in a proton gradient. Cyanobacterial NDH-1 also plays a role in inorganic carbon-concentration.</text>
</comment>
<comment type="catalytic activity">
    <reaction evidence="1">
        <text>a plastoquinone + NADH + (n+1) H(+)(in) = a plastoquinol + NAD(+) + n H(+)(out)</text>
        <dbReference type="Rhea" id="RHEA:42608"/>
        <dbReference type="Rhea" id="RHEA-COMP:9561"/>
        <dbReference type="Rhea" id="RHEA-COMP:9562"/>
        <dbReference type="ChEBI" id="CHEBI:15378"/>
        <dbReference type="ChEBI" id="CHEBI:17757"/>
        <dbReference type="ChEBI" id="CHEBI:57540"/>
        <dbReference type="ChEBI" id="CHEBI:57945"/>
        <dbReference type="ChEBI" id="CHEBI:62192"/>
    </reaction>
</comment>
<comment type="catalytic activity">
    <reaction evidence="1">
        <text>a plastoquinone + NADPH + (n+1) H(+)(in) = a plastoquinol + NADP(+) + n H(+)(out)</text>
        <dbReference type="Rhea" id="RHEA:42612"/>
        <dbReference type="Rhea" id="RHEA-COMP:9561"/>
        <dbReference type="Rhea" id="RHEA-COMP:9562"/>
        <dbReference type="ChEBI" id="CHEBI:15378"/>
        <dbReference type="ChEBI" id="CHEBI:17757"/>
        <dbReference type="ChEBI" id="CHEBI:57783"/>
        <dbReference type="ChEBI" id="CHEBI:58349"/>
        <dbReference type="ChEBI" id="CHEBI:62192"/>
    </reaction>
</comment>
<comment type="subunit">
    <text evidence="1">NDH-1 can be composed of about 15 different subunits; different subcomplexes with different compositions have been identified which probably have different functions.</text>
</comment>
<comment type="subcellular location">
    <subcellularLocation>
        <location evidence="1">Cellular thylakoid membrane</location>
        <topology evidence="1">Multi-pass membrane protein</topology>
    </subcellularLocation>
</comment>
<comment type="similarity">
    <text evidence="1">Belongs to the complex I NdhL subunit family.</text>
</comment>
<organism>
    <name type="scientific">Prochlorococcus marinus (strain NATL1A)</name>
    <dbReference type="NCBI Taxonomy" id="167555"/>
    <lineage>
        <taxon>Bacteria</taxon>
        <taxon>Bacillati</taxon>
        <taxon>Cyanobacteriota</taxon>
        <taxon>Cyanophyceae</taxon>
        <taxon>Synechococcales</taxon>
        <taxon>Prochlorococcaceae</taxon>
        <taxon>Prochlorococcus</taxon>
    </lineage>
</organism>